<organism>
    <name type="scientific">Influenza A virus (strain A/Port Chalmers/1/1973 H3N2)</name>
    <dbReference type="NCBI Taxonomy" id="385624"/>
    <lineage>
        <taxon>Viruses</taxon>
        <taxon>Riboviria</taxon>
        <taxon>Orthornavirae</taxon>
        <taxon>Negarnaviricota</taxon>
        <taxon>Polyploviricotina</taxon>
        <taxon>Insthoviricetes</taxon>
        <taxon>Articulavirales</taxon>
        <taxon>Orthomyxoviridae</taxon>
        <taxon>Alphainfluenzavirus</taxon>
        <taxon>Alphainfluenzavirus influenzae</taxon>
        <taxon>Influenza A virus</taxon>
    </lineage>
</organism>
<comment type="function">
    <text evidence="2">Plays an essential role in viral RNA transcription and replication by forming the heterotrimeric polymerase complex together with PB1 and PB2 subunits. The complex transcribes viral mRNAs by using a unique mechanism called cap-snatching. It consists in the hijacking and cleavage of host capped pre-mRNAs. These short capped RNAs are then used as primers for viral mRNAs. The PB2 subunit is responsible for the binding of the 5' cap of cellular pre-mRNAs which are subsequently cleaved after 10-13 nucleotides by the PA subunit that carries the endonuclease activity.</text>
</comment>
<comment type="cofactor">
    <cofactor evidence="2">
        <name>Mn(2+)</name>
        <dbReference type="ChEBI" id="CHEBI:29035"/>
    </cofactor>
    <text evidence="2">Binds 2 manganese ions per subunit.</text>
</comment>
<comment type="subunit">
    <text evidence="1 2">Influenza RNA polymerase is composed of three subunits: PB1, PB2 and PA. Interacts (via C-terminus) with PB1 (via N-terminus).</text>
</comment>
<comment type="subcellular location">
    <subcellularLocation>
        <location evidence="2">Host cytoplasm</location>
    </subcellularLocation>
    <subcellularLocation>
        <location evidence="2">Host nucleus</location>
    </subcellularLocation>
    <text evidence="1 2">PB1 and PA are transported in the host nucleus as a complex.</text>
</comment>
<comment type="alternative products">
    <event type="ribosomal frameshifting"/>
    <isoform>
        <id>Q1PUD2-1</id>
        <name>PA</name>
        <sequence type="displayed"/>
    </isoform>
    <isoform>
        <id>P0DJT9-1</id>
        <name>PA-X</name>
        <sequence type="external"/>
    </isoform>
</comment>
<comment type="PTM">
    <text evidence="1 2">Phosphorylated on serines and threonines by host kinases, including human casein kinase II.</text>
</comment>
<comment type="similarity">
    <text evidence="2">Belongs to the influenza viruses PA family.</text>
</comment>
<reference key="1">
    <citation type="submission" date="2006-04" db="EMBL/GenBank/DDBJ databases">
        <title>The NIAID influenza genome sequencing project.</title>
        <authorList>
            <person name="Spiro D."/>
            <person name="Ghedin E."/>
            <person name="Sengamalay N."/>
            <person name="Halpin R."/>
            <person name="Boyne A."/>
            <person name="Zaborsky J."/>
            <person name="Feldblyum T."/>
            <person name="Subbu V."/>
            <person name="Sparenborg J."/>
            <person name="Shumway M."/>
            <person name="Sitz J."/>
            <person name="Katzel D."/>
            <person name="Koo H."/>
            <person name="Salzberg S.L."/>
            <person name="Griesemer S."/>
            <person name="St George K."/>
            <person name="Bennett R."/>
            <person name="Taylor J."/>
            <person name="Bennink J.R."/>
            <person name="Yewdell J.W."/>
            <person name="Bao Y."/>
            <person name="Bolotov P."/>
            <person name="Dernovoy D."/>
            <person name="Kiryutin B."/>
            <person name="Lipman D.J."/>
            <person name="Tatusova T."/>
        </authorList>
    </citation>
    <scope>NUCLEOTIDE SEQUENCE [GENOMIC RNA]</scope>
</reference>
<protein>
    <recommendedName>
        <fullName evidence="2">Polymerase acidic protein</fullName>
        <ecNumber evidence="2">3.1.-.-</ecNumber>
    </recommendedName>
    <alternativeName>
        <fullName evidence="2">RNA-directed RNA polymerase subunit P2</fullName>
    </alternativeName>
</protein>
<dbReference type="EC" id="3.1.-.-" evidence="2"/>
<dbReference type="EMBL" id="CY009353">
    <property type="protein sequence ID" value="ABE12571.1"/>
    <property type="molecule type" value="Genomic_RNA"/>
</dbReference>
<dbReference type="SMR" id="Q1PUD2"/>
<dbReference type="MEROPS" id="S62.001"/>
<dbReference type="Proteomes" id="UP000133870">
    <property type="component" value="Genome"/>
</dbReference>
<dbReference type="GO" id="GO:0030430">
    <property type="term" value="C:host cell cytoplasm"/>
    <property type="evidence" value="ECO:0007669"/>
    <property type="project" value="UniProtKB-SubCell"/>
</dbReference>
<dbReference type="GO" id="GO:0042025">
    <property type="term" value="C:host cell nucleus"/>
    <property type="evidence" value="ECO:0007669"/>
    <property type="project" value="UniProtKB-SubCell"/>
</dbReference>
<dbReference type="GO" id="GO:0004519">
    <property type="term" value="F:endonuclease activity"/>
    <property type="evidence" value="ECO:0007669"/>
    <property type="project" value="UniProtKB-KW"/>
</dbReference>
<dbReference type="GO" id="GO:0046872">
    <property type="term" value="F:metal ion binding"/>
    <property type="evidence" value="ECO:0007669"/>
    <property type="project" value="UniProtKB-KW"/>
</dbReference>
<dbReference type="GO" id="GO:0003723">
    <property type="term" value="F:RNA binding"/>
    <property type="evidence" value="ECO:0007669"/>
    <property type="project" value="UniProtKB-UniRule"/>
</dbReference>
<dbReference type="GO" id="GO:0075526">
    <property type="term" value="P:cap snatching"/>
    <property type="evidence" value="ECO:0007669"/>
    <property type="project" value="UniProtKB-UniRule"/>
</dbReference>
<dbReference type="GO" id="GO:0006351">
    <property type="term" value="P:DNA-templated transcription"/>
    <property type="evidence" value="ECO:0007669"/>
    <property type="project" value="UniProtKB-UniRule"/>
</dbReference>
<dbReference type="GO" id="GO:0039657">
    <property type="term" value="P:symbiont-mediated suppression of host gene expression"/>
    <property type="evidence" value="ECO:0007669"/>
    <property type="project" value="UniProtKB-KW"/>
</dbReference>
<dbReference type="GO" id="GO:0039523">
    <property type="term" value="P:symbiont-mediated suppression of host mRNA transcription via inhibition of RNA polymerase II activity"/>
    <property type="evidence" value="ECO:0007669"/>
    <property type="project" value="UniProtKB-UniRule"/>
</dbReference>
<dbReference type="GO" id="GO:0039694">
    <property type="term" value="P:viral RNA genome replication"/>
    <property type="evidence" value="ECO:0007669"/>
    <property type="project" value="InterPro"/>
</dbReference>
<dbReference type="GO" id="GO:0075523">
    <property type="term" value="P:viral translational frameshifting"/>
    <property type="evidence" value="ECO:0007669"/>
    <property type="project" value="UniProtKB-KW"/>
</dbReference>
<dbReference type="FunFam" id="3.40.91.90:FF:000001">
    <property type="entry name" value="Polymerase acidic protein"/>
    <property type="match status" value="1"/>
</dbReference>
<dbReference type="Gene3D" id="3.40.91.90">
    <property type="entry name" value="Influenza RNA-dependent RNA polymerase subunit PA, endonuclease domain"/>
    <property type="match status" value="1"/>
</dbReference>
<dbReference type="HAMAP" id="MF_04063">
    <property type="entry name" value="INFV_PA"/>
    <property type="match status" value="1"/>
</dbReference>
<dbReference type="InterPro" id="IPR037534">
    <property type="entry name" value="INFV_PA"/>
</dbReference>
<dbReference type="InterPro" id="IPR001009">
    <property type="entry name" value="PA/PA-X"/>
</dbReference>
<dbReference type="InterPro" id="IPR038372">
    <property type="entry name" value="PA/PA-X_sf"/>
</dbReference>
<dbReference type="Pfam" id="PF00603">
    <property type="entry name" value="Flu_PA"/>
    <property type="match status" value="1"/>
</dbReference>
<accession>Q1PUD2</accession>
<feature type="chain" id="PRO_0000279259" description="Polymerase acidic protein">
    <location>
        <begin position="1"/>
        <end position="716"/>
    </location>
</feature>
<feature type="short sequence motif" description="Nuclear localization signal 1 (NLS1)" evidence="1 2">
    <location>
        <begin position="124"/>
        <end position="139"/>
    </location>
</feature>
<feature type="short sequence motif" description="Nuclear localization signal 2 (NLS2)" evidence="1 2">
    <location>
        <begin position="184"/>
        <end position="247"/>
    </location>
</feature>
<feature type="binding site" evidence="2">
    <location>
        <position position="41"/>
    </location>
    <ligand>
        <name>Mn(2+)</name>
        <dbReference type="ChEBI" id="CHEBI:29035"/>
        <label>1</label>
    </ligand>
</feature>
<feature type="binding site" evidence="2">
    <location>
        <position position="80"/>
    </location>
    <ligand>
        <name>Mn(2+)</name>
        <dbReference type="ChEBI" id="CHEBI:29035"/>
        <label>2</label>
    </ligand>
</feature>
<feature type="binding site" evidence="2">
    <location>
        <position position="108"/>
    </location>
    <ligand>
        <name>Mn(2+)</name>
        <dbReference type="ChEBI" id="CHEBI:29035"/>
        <label>1</label>
    </ligand>
</feature>
<feature type="binding site" evidence="2">
    <location>
        <position position="108"/>
    </location>
    <ligand>
        <name>Mn(2+)</name>
        <dbReference type="ChEBI" id="CHEBI:29035"/>
        <label>2</label>
    </ligand>
</feature>
<feature type="binding site" evidence="2">
    <location>
        <position position="119"/>
    </location>
    <ligand>
        <name>Mn(2+)</name>
        <dbReference type="ChEBI" id="CHEBI:29035"/>
        <label>1</label>
    </ligand>
</feature>
<feature type="binding site" evidence="2">
    <location>
        <position position="120"/>
    </location>
    <ligand>
        <name>Mn(2+)</name>
        <dbReference type="ChEBI" id="CHEBI:29035"/>
        <label>1</label>
    </ligand>
</feature>
<sequence length="716" mass="82890">MEDFVRQCFNPMVVELAEKAMKEYGEDLKIETNKFAAICTHLEVCFMYSDFHFINEQGESIVVELDDPNALLKHRFEIIEGRDRTMAWTVVNSICNTTGAEKPKFLPDLYDYKENRFIEIGVTRREVHIYYLEKANKIKSENTHIHIFSFTGEEMATKADYTLDEESRARIKTRLFTIRQEMANRGLWDSFRQSERGEETIEERFEITGTMRRLADQSLPPNFSCLENFRAYVDGFEPNGCIEGKLSQMSKEVNAKIEPFLKTTPRPIKLPDGPPCFQRSKFLLMDALKLSIEDPSHEGEGIPLYDAIKCMRTFFGWKEPYIVKPHEKGINPNYLLSWKQVLAELQDIENEEKIPRTKNMKKTSQLKWALGENMAPEKVDFDNCRDISDLRQYDSDEPELRSLSSWIQNEFNKACELTDSIWIELDEIGEDVAPIEYIASMRRNYFTAEVSHCRATEYIMKGVYINTALLNASCAAMDDFQLIPMISKCRTKEGRRKTNLYGFIIKGRSHLRNDTDVVNFVSMEFSLTDPRLEPHKWEKYCVLEIGDMLLRSAIGQMSRPMFLYVRTNGTSKIKMKWGMEMRRCLLQSLQQIESMIEAESSVKEKDMTKEFFENKSETWPIGESPKGVEEGSIGKVCRTLLAKSVFNSLYASPQLEGFSAESRKLLLVVQALRDNLEPGTFDLGGLYEAIEECLINDPWVLLNASWFNSFLTHALR</sequence>
<evidence type="ECO:0000250" key="1">
    <source>
        <dbReference type="UniProtKB" id="P03433"/>
    </source>
</evidence>
<evidence type="ECO:0000255" key="2">
    <source>
        <dbReference type="HAMAP-Rule" id="MF_04063"/>
    </source>
</evidence>
<proteinExistence type="inferred from homology"/>
<name>PA_I73A5</name>
<keyword id="KW-1157">Cap snatching</keyword>
<keyword id="KW-0255">Endonuclease</keyword>
<keyword id="KW-1262">Eukaryotic host gene expression shutoff by virus</keyword>
<keyword id="KW-1191">Eukaryotic host transcription shutoff by virus</keyword>
<keyword id="KW-1035">Host cytoplasm</keyword>
<keyword id="KW-1190">Host gene expression shutoff by virus</keyword>
<keyword id="KW-1048">Host nucleus</keyword>
<keyword id="KW-0945">Host-virus interaction</keyword>
<keyword id="KW-0378">Hydrolase</keyword>
<keyword id="KW-1104">Inhibition of host RNA polymerase II by virus</keyword>
<keyword id="KW-0464">Manganese</keyword>
<keyword id="KW-0479">Metal-binding</keyword>
<keyword id="KW-0540">Nuclease</keyword>
<keyword id="KW-0597">Phosphoprotein</keyword>
<keyword id="KW-0688">Ribosomal frameshifting</keyword>
<gene>
    <name evidence="2" type="primary">PA</name>
</gene>
<organismHost>
    <name type="scientific">Aves</name>
    <dbReference type="NCBI Taxonomy" id="8782"/>
</organismHost>
<organismHost>
    <name type="scientific">Cetacea</name>
    <name type="common">whales</name>
    <dbReference type="NCBI Taxonomy" id="9721"/>
</organismHost>
<organismHost>
    <name type="scientific">Homo sapiens</name>
    <name type="common">Human</name>
    <dbReference type="NCBI Taxonomy" id="9606"/>
</organismHost>
<organismHost>
    <name type="scientific">Phocidae</name>
    <name type="common">true seals</name>
    <dbReference type="NCBI Taxonomy" id="9709"/>
</organismHost>
<organismHost>
    <name type="scientific">Sus scrofa</name>
    <name type="common">Pig</name>
    <dbReference type="NCBI Taxonomy" id="9823"/>
</organismHost>